<proteinExistence type="inferred from homology"/>
<protein>
    <recommendedName>
        <fullName evidence="1">Phosphoglucosamine mutase</fullName>
        <ecNumber evidence="1">5.4.2.10</ecNumber>
    </recommendedName>
</protein>
<comment type="function">
    <text evidence="1">Catalyzes the conversion of glucosamine-6-phosphate to glucosamine-1-phosphate.</text>
</comment>
<comment type="catalytic activity">
    <reaction evidence="1">
        <text>alpha-D-glucosamine 1-phosphate = D-glucosamine 6-phosphate</text>
        <dbReference type="Rhea" id="RHEA:23424"/>
        <dbReference type="ChEBI" id="CHEBI:58516"/>
        <dbReference type="ChEBI" id="CHEBI:58725"/>
        <dbReference type="EC" id="5.4.2.10"/>
    </reaction>
</comment>
<comment type="cofactor">
    <cofactor evidence="1">
        <name>Mg(2+)</name>
        <dbReference type="ChEBI" id="CHEBI:18420"/>
    </cofactor>
    <text evidence="1">Binds 1 Mg(2+) ion per subunit.</text>
</comment>
<comment type="PTM">
    <text evidence="1">Activated by phosphorylation.</text>
</comment>
<comment type="similarity">
    <text evidence="1">Belongs to the phosphohexose mutase family.</text>
</comment>
<reference key="1">
    <citation type="journal article" date="2009" name="Vaccine">
        <title>Whole genome sequence analysis of Mycobacterium bovis bacillus Calmette-Guerin (BCG) Tokyo 172: a comparative study of BCG vaccine substrains.</title>
        <authorList>
            <person name="Seki M."/>
            <person name="Honda I."/>
            <person name="Fujita I."/>
            <person name="Yano I."/>
            <person name="Yamamoto S."/>
            <person name="Koyama A."/>
        </authorList>
    </citation>
    <scope>NUCLEOTIDE SEQUENCE [LARGE SCALE GENOMIC DNA]</scope>
    <source>
        <strain>BCG / Tokyo 172 / ATCC 35737 / TMC 1019</strain>
    </source>
</reference>
<sequence>MGRLFGTDGVRGVANRELTAELALALGAAAARRLSRSGAPGRRVAVLGRDPRASGEMLEAAVIAGLTSEGVDALRVGVLPTPAVAYLTGAYDADFGVMISASHNPMPDNGIKIFGPGGHKLDDDTEDQIEDLVLGVSRGPGLRPAGAGIGRVIDAEDATERYLRHVAKAATARLDDLAVVVDCAHGAASSAAPRAYRAAGARVIAINAEPNGRNINDGCGSTHLDPLRAAVLAHRADLGLAHDGDADRCLAVDANGDLVDGDAIMVVLALAMKEAGELACNTLVATVMSNLGLHLAMRSAGVTVRTTAVGDRYVLEELRAGDYSLGGEQSGHIVMPALGSTGDGIVTGLRLMTRMVQTGSSLSDLASAMRTLPQVLINVEVVDKATAAAAPSVRTAVEQAAAELGDTGRILLRPSGTEPMIRVMVEAADEGVAQRLAATVADAVSTAR</sequence>
<dbReference type="EC" id="5.4.2.10" evidence="1"/>
<dbReference type="EMBL" id="AP010918">
    <property type="protein sequence ID" value="BAH27779.1"/>
    <property type="molecule type" value="Genomic_DNA"/>
</dbReference>
<dbReference type="RefSeq" id="WP_003418304.1">
    <property type="nucleotide sequence ID" value="NZ_CP014566.1"/>
</dbReference>
<dbReference type="SMR" id="C1AHQ0"/>
<dbReference type="KEGG" id="mbt:JTY_3507"/>
<dbReference type="HOGENOM" id="CLU_016950_7_0_11"/>
<dbReference type="GO" id="GO:0005829">
    <property type="term" value="C:cytosol"/>
    <property type="evidence" value="ECO:0007669"/>
    <property type="project" value="TreeGrafter"/>
</dbReference>
<dbReference type="GO" id="GO:0000287">
    <property type="term" value="F:magnesium ion binding"/>
    <property type="evidence" value="ECO:0007669"/>
    <property type="project" value="UniProtKB-UniRule"/>
</dbReference>
<dbReference type="GO" id="GO:0008966">
    <property type="term" value="F:phosphoglucosamine mutase activity"/>
    <property type="evidence" value="ECO:0007669"/>
    <property type="project" value="UniProtKB-UniRule"/>
</dbReference>
<dbReference type="GO" id="GO:0004615">
    <property type="term" value="F:phosphomannomutase activity"/>
    <property type="evidence" value="ECO:0007669"/>
    <property type="project" value="TreeGrafter"/>
</dbReference>
<dbReference type="GO" id="GO:0005975">
    <property type="term" value="P:carbohydrate metabolic process"/>
    <property type="evidence" value="ECO:0007669"/>
    <property type="project" value="InterPro"/>
</dbReference>
<dbReference type="GO" id="GO:0009252">
    <property type="term" value="P:peptidoglycan biosynthetic process"/>
    <property type="evidence" value="ECO:0007669"/>
    <property type="project" value="TreeGrafter"/>
</dbReference>
<dbReference type="GO" id="GO:0006048">
    <property type="term" value="P:UDP-N-acetylglucosamine biosynthetic process"/>
    <property type="evidence" value="ECO:0007669"/>
    <property type="project" value="TreeGrafter"/>
</dbReference>
<dbReference type="CDD" id="cd05802">
    <property type="entry name" value="GlmM"/>
    <property type="match status" value="1"/>
</dbReference>
<dbReference type="FunFam" id="3.30.310.50:FF:000001">
    <property type="entry name" value="Phosphoglucosamine mutase"/>
    <property type="match status" value="1"/>
</dbReference>
<dbReference type="FunFam" id="3.40.120.10:FF:000001">
    <property type="entry name" value="Phosphoglucosamine mutase"/>
    <property type="match status" value="1"/>
</dbReference>
<dbReference type="FunFam" id="3.40.120.10:FF:000002">
    <property type="entry name" value="Phosphoglucosamine mutase"/>
    <property type="match status" value="1"/>
</dbReference>
<dbReference type="Gene3D" id="3.40.120.10">
    <property type="entry name" value="Alpha-D-Glucose-1,6-Bisphosphate, subunit A, domain 3"/>
    <property type="match status" value="3"/>
</dbReference>
<dbReference type="Gene3D" id="3.30.310.50">
    <property type="entry name" value="Alpha-D-phosphohexomutase, C-terminal domain"/>
    <property type="match status" value="1"/>
</dbReference>
<dbReference type="HAMAP" id="MF_01554_B">
    <property type="entry name" value="GlmM_B"/>
    <property type="match status" value="1"/>
</dbReference>
<dbReference type="InterPro" id="IPR005844">
    <property type="entry name" value="A-D-PHexomutase_a/b/a-I"/>
</dbReference>
<dbReference type="InterPro" id="IPR016055">
    <property type="entry name" value="A-D-PHexomutase_a/b/a-I/II/III"/>
</dbReference>
<dbReference type="InterPro" id="IPR005845">
    <property type="entry name" value="A-D-PHexomutase_a/b/a-II"/>
</dbReference>
<dbReference type="InterPro" id="IPR005846">
    <property type="entry name" value="A-D-PHexomutase_a/b/a-III"/>
</dbReference>
<dbReference type="InterPro" id="IPR005843">
    <property type="entry name" value="A-D-PHexomutase_C"/>
</dbReference>
<dbReference type="InterPro" id="IPR036900">
    <property type="entry name" value="A-D-PHexomutase_C_sf"/>
</dbReference>
<dbReference type="InterPro" id="IPR016066">
    <property type="entry name" value="A-D-PHexomutase_CS"/>
</dbReference>
<dbReference type="InterPro" id="IPR005841">
    <property type="entry name" value="Alpha-D-phosphohexomutase_SF"/>
</dbReference>
<dbReference type="InterPro" id="IPR006352">
    <property type="entry name" value="GlmM_bact"/>
</dbReference>
<dbReference type="InterPro" id="IPR050060">
    <property type="entry name" value="Phosphoglucosamine_mutase"/>
</dbReference>
<dbReference type="NCBIfam" id="TIGR01455">
    <property type="entry name" value="glmM"/>
    <property type="match status" value="1"/>
</dbReference>
<dbReference type="PANTHER" id="PTHR42946:SF1">
    <property type="entry name" value="PHOSPHOGLUCOMUTASE (ALPHA-D-GLUCOSE-1,6-BISPHOSPHATE-DEPENDENT)"/>
    <property type="match status" value="1"/>
</dbReference>
<dbReference type="PANTHER" id="PTHR42946">
    <property type="entry name" value="PHOSPHOHEXOSE MUTASE"/>
    <property type="match status" value="1"/>
</dbReference>
<dbReference type="Pfam" id="PF02878">
    <property type="entry name" value="PGM_PMM_I"/>
    <property type="match status" value="1"/>
</dbReference>
<dbReference type="Pfam" id="PF02879">
    <property type="entry name" value="PGM_PMM_II"/>
    <property type="match status" value="1"/>
</dbReference>
<dbReference type="Pfam" id="PF02880">
    <property type="entry name" value="PGM_PMM_III"/>
    <property type="match status" value="1"/>
</dbReference>
<dbReference type="Pfam" id="PF00408">
    <property type="entry name" value="PGM_PMM_IV"/>
    <property type="match status" value="1"/>
</dbReference>
<dbReference type="PRINTS" id="PR00509">
    <property type="entry name" value="PGMPMM"/>
</dbReference>
<dbReference type="SUPFAM" id="SSF55957">
    <property type="entry name" value="Phosphoglucomutase, C-terminal domain"/>
    <property type="match status" value="1"/>
</dbReference>
<dbReference type="SUPFAM" id="SSF53738">
    <property type="entry name" value="Phosphoglucomutase, first 3 domains"/>
    <property type="match status" value="3"/>
</dbReference>
<dbReference type="PROSITE" id="PS00710">
    <property type="entry name" value="PGM_PMM"/>
    <property type="match status" value="1"/>
</dbReference>
<feature type="chain" id="PRO_1000185376" description="Phosphoglucosamine mutase">
    <location>
        <begin position="1"/>
        <end position="448"/>
    </location>
</feature>
<feature type="active site" description="Phosphoserine intermediate" evidence="1">
    <location>
        <position position="102"/>
    </location>
</feature>
<feature type="binding site" description="via phosphate group" evidence="1">
    <location>
        <position position="102"/>
    </location>
    <ligand>
        <name>Mg(2+)</name>
        <dbReference type="ChEBI" id="CHEBI:18420"/>
    </ligand>
</feature>
<feature type="binding site" evidence="1">
    <location>
        <position position="243"/>
    </location>
    <ligand>
        <name>Mg(2+)</name>
        <dbReference type="ChEBI" id="CHEBI:18420"/>
    </ligand>
</feature>
<feature type="binding site" evidence="1">
    <location>
        <position position="245"/>
    </location>
    <ligand>
        <name>Mg(2+)</name>
        <dbReference type="ChEBI" id="CHEBI:18420"/>
    </ligand>
</feature>
<feature type="binding site" evidence="1">
    <location>
        <position position="247"/>
    </location>
    <ligand>
        <name>Mg(2+)</name>
        <dbReference type="ChEBI" id="CHEBI:18420"/>
    </ligand>
</feature>
<feature type="modified residue" description="Phosphoserine" evidence="1">
    <location>
        <position position="102"/>
    </location>
</feature>
<name>GLMM_MYCBT</name>
<gene>
    <name evidence="1" type="primary">glmM</name>
    <name type="ordered locus">JTY_3507</name>
</gene>
<organism>
    <name type="scientific">Mycobacterium bovis (strain BCG / Tokyo 172 / ATCC 35737 / TMC 1019)</name>
    <dbReference type="NCBI Taxonomy" id="561275"/>
    <lineage>
        <taxon>Bacteria</taxon>
        <taxon>Bacillati</taxon>
        <taxon>Actinomycetota</taxon>
        <taxon>Actinomycetes</taxon>
        <taxon>Mycobacteriales</taxon>
        <taxon>Mycobacteriaceae</taxon>
        <taxon>Mycobacterium</taxon>
        <taxon>Mycobacterium tuberculosis complex</taxon>
    </lineage>
</organism>
<evidence type="ECO:0000255" key="1">
    <source>
        <dbReference type="HAMAP-Rule" id="MF_01554"/>
    </source>
</evidence>
<accession>C1AHQ0</accession>
<keyword id="KW-0413">Isomerase</keyword>
<keyword id="KW-0460">Magnesium</keyword>
<keyword id="KW-0479">Metal-binding</keyword>
<keyword id="KW-0597">Phosphoprotein</keyword>